<accession>Q9AIX9</accession>
<comment type="subcellular location">
    <subcellularLocation>
        <location evidence="2">Cytoplasm</location>
    </subcellularLocation>
</comment>
<gene>
    <name type="primary">sca4</name>
    <name type="synonym">D</name>
</gene>
<feature type="chain" id="PRO_0000097608" description="Antigenic heat-stable 120 kDa protein">
    <location>
        <begin position="1" status="less than"/>
        <end position="998" status="greater than"/>
    </location>
</feature>
<feature type="region of interest" description="Disordered" evidence="1">
    <location>
        <begin position="1"/>
        <end position="69"/>
    </location>
</feature>
<feature type="compositionally biased region" description="Acidic residues" evidence="1">
    <location>
        <begin position="12"/>
        <end position="21"/>
    </location>
</feature>
<feature type="compositionally biased region" description="Polar residues" evidence="1">
    <location>
        <begin position="46"/>
        <end position="68"/>
    </location>
</feature>
<feature type="non-terminal residue">
    <location>
        <position position="1"/>
    </location>
</feature>
<feature type="non-terminal residue">
    <location>
        <position position="998"/>
    </location>
</feature>
<protein>
    <recommendedName>
        <fullName>Antigenic heat-stable 120 kDa protein</fullName>
    </recommendedName>
    <alternativeName>
        <fullName>120 kDa antigen</fullName>
    </alternativeName>
    <alternativeName>
        <fullName>Protein PS 120</fullName>
        <shortName>PS120</shortName>
    </alternativeName>
</protein>
<organism>
    <name type="scientific">Rickettsia akari</name>
    <dbReference type="NCBI Taxonomy" id="786"/>
    <lineage>
        <taxon>Bacteria</taxon>
        <taxon>Pseudomonadati</taxon>
        <taxon>Pseudomonadota</taxon>
        <taxon>Alphaproteobacteria</taxon>
        <taxon>Rickettsiales</taxon>
        <taxon>Rickettsiaceae</taxon>
        <taxon>Rickettsieae</taxon>
        <taxon>Rickettsia</taxon>
        <taxon>spotted fever group</taxon>
    </lineage>
</organism>
<proteinExistence type="predicted"/>
<evidence type="ECO:0000256" key="1">
    <source>
        <dbReference type="SAM" id="MobiDB-lite"/>
    </source>
</evidence>
<evidence type="ECO:0000305" key="2"/>
<sequence length="998" mass="109328">GGFMSQDHTGYENDEGYESDIDEKTQEQAAPAQPTLDTADDGFSFTPASSTQSTPAISTLSGTISTDDQISDPITKAVREIIIQQQKDEIAEQILKDLAALVDRDLAEQKRKEIEEEKEKDKKLSVFFGNPANREFIDNALEKPELKKKLESIEITGYKNILLTYSAANGYHGGFKPVQWENQISASDLRATVVKNDAGDELCTLNETTVKTKPFTVAKKDGTQVQINSYRAIDFPIKLDKADGSMHLSMVALKADGTKPSKDRAVYFTAHYEEGPNGKPQLKEISSPQPLKFAGDGPDAVAYIEHGGEIYTLAVTRGKYKEMMKEVELHQGQSVDLSQIIAEDLTKVQGRSQETLQPIITPNQELKSSIETPTTTQVPPITPASQPVHTETSQMPQSQQVNPNLFNAATALSCSMQDLLNYVNAGLTKEKDGNTQIDLINEAATAILNNEKEKQANFITLTKNMVNNNALTPDTKVARVNAVLETIKNNQDTPDIEKSKMLEATVAITLNSENLTPKQKQQMLEKAVDVDLSFKDDTSRAVAIDGITGAVIKSNLSTKDKGTMLIAVGDKVNASELSNAEKQQLLGSVLKKGVETKILSPEQQQLMQQNLDKITAEQTKNDNITEVQGILANPAFNTIAKTAAIQKVTTKVLDSPITAEIKGETLESITKIVAESPLNVQDKTDIVKGMGEAIASHRTMAPTKKIAAIESVETGVAKSITDLEDKKLMTKGLVDGIYEDKANPEITSEMMKAVSKGVDNSTAIPEDKQALKDAASEAALDRATQNFTEGLKGQNLDEPKPRDDIYNKAQDIAYALKNVVTTVLDANPEKREVSEEEVMNKTSSILNDISKIAIEKVNNLRAMLSPDSNLKTLEEKKAEATKKVDELVKEFGTKSSTEEQQSFIQANLIDDKTLSKEVRLQTIDKLLQEQAQKRAEAIKNPNVKTEDLRVVSGQSALKPISNDEPDIEKTKMVVGRDRVNIKDNIKIMGALMNARDSI</sequence>
<reference key="1">
    <citation type="journal article" date="2001" name="Int. J. Syst. Evol. Microbiol.">
        <title>Phylogeny of Rickettsia spp. inferred by comparing sequences of 'gene D', which encodes an intracytoplasmic protein.</title>
        <authorList>
            <person name="Sekeyova Z."/>
            <person name="Roux V."/>
            <person name="Raoult D."/>
        </authorList>
    </citation>
    <scope>NUCLEOTIDE SEQUENCE [GENOMIC DNA]</scope>
</reference>
<name>SCA4_RICAK</name>
<dbReference type="EMBL" id="AF213016">
    <property type="protein sequence ID" value="AAK30691.1"/>
    <property type="molecule type" value="Genomic_DNA"/>
</dbReference>
<dbReference type="SMR" id="Q9AIX9"/>
<dbReference type="GO" id="GO:0005737">
    <property type="term" value="C:cytoplasm"/>
    <property type="evidence" value="ECO:0007669"/>
    <property type="project" value="UniProtKB-SubCell"/>
</dbReference>
<dbReference type="InterPro" id="IPR020954">
    <property type="entry name" value="Rickettsia_antigen_120kDa"/>
</dbReference>
<dbReference type="NCBIfam" id="NF038365">
    <property type="entry name" value="Sca4_fam"/>
    <property type="match status" value="1"/>
</dbReference>
<dbReference type="Pfam" id="PF12574">
    <property type="entry name" value="120_Rick_ant"/>
    <property type="match status" value="1"/>
</dbReference>
<keyword id="KW-0963">Cytoplasm</keyword>